<sequence>MPSLSEAYRAHPVHVNHKHPDFNSLQELPESYNWTHLDDHTLIDSNNIMKESTTTVPVIDLNDPNASKLIGLACKTWGVYQVMNHGIPLSLLEDIQWLGQTLFSLPSHQKHKATRSPDGVSGYGIARISSFFPKLMWYEGFTIVGSPLDHFRELWPQDYTRFCDIVVQYDETMKKLAGTLMCLMLDSLGITKEDIKWAGSKAQFEKACAALQLNSYPSCPDPDHAMGLAPHTDSTFLTILSQNDISGLQVNREGSGWITVPPLQGGLVVNVGDLFHILSNGLYPSVLHRVLVNRTRQRFSVAYLYGPPSNVEICPHAKLIGPTKPPLYRSVTWNEYLGTKAKHFNKALSSVRLCTPINGLFDVNDSNKNSVQVG</sequence>
<organism>
    <name type="scientific">Pisum sativum</name>
    <name type="common">Garden pea</name>
    <name type="synonym">Lathyrus oleraceus</name>
    <dbReference type="NCBI Taxonomy" id="3888"/>
    <lineage>
        <taxon>Eukaryota</taxon>
        <taxon>Viridiplantae</taxon>
        <taxon>Streptophyta</taxon>
        <taxon>Embryophyta</taxon>
        <taxon>Tracheophyta</taxon>
        <taxon>Spermatophyta</taxon>
        <taxon>Magnoliopsida</taxon>
        <taxon>eudicotyledons</taxon>
        <taxon>Gunneridae</taxon>
        <taxon>Pentapetalae</taxon>
        <taxon>rosids</taxon>
        <taxon>fabids</taxon>
        <taxon>Fabales</taxon>
        <taxon>Fabaceae</taxon>
        <taxon>Papilionoideae</taxon>
        <taxon>50 kb inversion clade</taxon>
        <taxon>NPAAA clade</taxon>
        <taxon>Hologalegina</taxon>
        <taxon>IRL clade</taxon>
        <taxon>Fabeae</taxon>
        <taxon>Pisum</taxon>
    </lineage>
</organism>
<comment type="function">
    <text evidence="4 5 6">Converts the inactive gibberellin (GA) precursors GA9 and GA20 in the bioactives gibberellins GA4 and GA1. Has a small activity on GA29, producing GA8. Unable to convert GA20 to GA5, GA5 to GA3 or GA12 to GA14. Involved in the production of bioactive GA for vegetative growth and development, but not for the 3-beta-hydroxylation of GA in developing seeds.</text>
</comment>
<comment type="catalytic activity">
    <reaction evidence="4 5 6">
        <text>gibberellin A20 + 2-oxoglutarate + O2 = gibberellin A1 + succinate + CO2</text>
        <dbReference type="Rhea" id="RHEA:10104"/>
        <dbReference type="ChEBI" id="CHEBI:15379"/>
        <dbReference type="ChEBI" id="CHEBI:16526"/>
        <dbReference type="ChEBI" id="CHEBI:16810"/>
        <dbReference type="ChEBI" id="CHEBI:30031"/>
        <dbReference type="ChEBI" id="CHEBI:58524"/>
        <dbReference type="ChEBI" id="CHEBI:58526"/>
        <dbReference type="EC" id="1.14.11.15"/>
    </reaction>
</comment>
<comment type="cofactor">
    <cofactor evidence="1">
        <name>L-ascorbate</name>
        <dbReference type="ChEBI" id="CHEBI:38290"/>
    </cofactor>
</comment>
<comment type="cofactor">
    <cofactor evidence="3">
        <name>Fe(2+)</name>
        <dbReference type="ChEBI" id="CHEBI:29033"/>
    </cofactor>
    <text evidence="3">Binds 1 Fe(2+) ion per subunit.</text>
</comment>
<comment type="biophysicochemical properties">
    <kinetics>
        <KM evidence="4">1.5 uM for GA9</KM>
        <KM evidence="4">13 uM for GA20</KM>
        <Vmax evidence="4">0.29 nmol/min/mg enzyme with GA9 as substrate</Vmax>
        <Vmax evidence="4">0.1 nmol/min/mg enzyme with GA20 as substrate</Vmax>
    </kinetics>
</comment>
<comment type="pathway">
    <text>Plant hormone biosynthesis; gibberellin biosynthesis.</text>
</comment>
<comment type="tissue specificity">
    <text evidence="4 6">Expressed in radicles, roots, internodes, cotyledons, leaves and shoots. Barely detected in developing seeds. Not detected in flowers or young fruits.</text>
</comment>
<comment type="developmental stage">
    <text evidence="4">Highly expressed in germinating seedlings.</text>
</comment>
<comment type="disruption phenotype">
    <text evidence="4">Dwarf phenotype.</text>
</comment>
<comment type="miscellaneous">
    <text>The Le gene controls the stem length trait studied by Gregor Mendel in 1866 (PubMed:9238076, PubMed:9286112).</text>
</comment>
<comment type="similarity">
    <text evidence="7">Belongs to the iron/ascorbate-dependent oxidoreductase family. GA3OX subfamily.</text>
</comment>
<comment type="online information" name="Protein Spotlight">
    <link uri="https://www.proteinspotlight.org/back_issues/159/"/>
    <text>On the garden pea - Issue 159 of April 2014</text>
</comment>
<accession>O24648</accession>
<accession>O22377</accession>
<accession>O24623</accession>
<accession>O24627</accession>
<reference key="1">
    <citation type="journal article" date="1997" name="Plant Cell">
        <title>Mendel's stem length gene (Le) encodes a gibberellin 3 beta-hydroxylase.</title>
        <authorList>
            <person name="Lester D.R."/>
            <person name="Ross J.J."/>
            <person name="Davies P.J."/>
            <person name="Reid J.B."/>
        </authorList>
    </citation>
    <scope>NUCLEOTIDE SEQUENCE [GENOMIC DNA / MRNA]</scope>
    <scope>FUNCTION</scope>
    <scope>CATALYTIC ACTIVITY</scope>
    <scope>MUTAGENESIS OF ALA-229</scope>
</reference>
<reference key="2">
    <citation type="journal article" date="1997" name="Proc. Natl. Acad. Sci. U.S.A.">
        <title>Mendel's dwarfing gene: cDNAs from the Le alleles and function of the expressed proteins.</title>
        <authorList>
            <person name="Martin D.N."/>
            <person name="Proebsting W.M."/>
            <person name="Hedden P."/>
        </authorList>
    </citation>
    <scope>NUCLEOTIDE SEQUENCE [MRNA]</scope>
    <scope>FUNCTION</scope>
    <scope>CATALYTIC ACTIVITY</scope>
    <scope>BIOPHYSICOCHEMICAL PROPERTIES</scope>
    <scope>DEVELOPMENTAL STAGE</scope>
    <scope>TISSUE SPECIFICITY</scope>
    <scope>MUTAGENESIS OF LEU-89; ALA-229 AND HIS-276</scope>
    <scope>DISRUPTION PHENOTYPE</scope>
</reference>
<reference key="3">
    <citation type="journal article" date="1999" name="Plant Growth Regul.">
        <title>The influence of the null le-2 mutation on gibberellin levels in developing pea seeds.</title>
        <authorList>
            <person name="Lester D.R."/>
            <person name="Mackenzie-Hose A.K."/>
            <person name="Davies P.J."/>
            <person name="Ross J.J."/>
            <person name="Reid J.B."/>
        </authorList>
    </citation>
    <scope>NUCLEOTIDE SEQUENCE [GENOMIC DNA / MRNA]</scope>
    <scope>MUTAGENESIS OF HIS-276</scope>
    <scope>FUNCTION</scope>
    <scope>CATALYTIC ACTIVITY</scope>
    <scope>TISSUE SPECIFICITY</scope>
</reference>
<proteinExistence type="evidence at protein level"/>
<protein>
    <recommendedName>
        <fullName>Gibberellin 3-beta-dioxygenase 1</fullName>
        <ecNumber>1.14.11.15</ecNumber>
    </recommendedName>
    <alternativeName>
        <fullName>GA 3-oxidase 1</fullName>
    </alternativeName>
    <alternativeName>
        <fullName>Gibberellin 3 beta-hydroxylase 1</fullName>
    </alternativeName>
</protein>
<keyword id="KW-0223">Dioxygenase</keyword>
<keyword id="KW-0408">Iron</keyword>
<keyword id="KW-0479">Metal-binding</keyword>
<keyword id="KW-0560">Oxidoreductase</keyword>
<name>G3OX_PEA</name>
<gene>
    <name type="primary">LE</name>
</gene>
<feature type="chain" id="PRO_0000425239" description="Gibberellin 3-beta-dioxygenase 1">
    <location>
        <begin position="1"/>
        <end position="374"/>
    </location>
</feature>
<feature type="domain" description="Fe2OG dioxygenase" evidence="3">
    <location>
        <begin position="206"/>
        <end position="307"/>
    </location>
</feature>
<feature type="active site" evidence="2">
    <location>
        <position position="298"/>
    </location>
</feature>
<feature type="binding site" evidence="3">
    <location>
        <position position="231"/>
    </location>
    <ligand>
        <name>Fe cation</name>
        <dbReference type="ChEBI" id="CHEBI:24875"/>
    </ligand>
</feature>
<feature type="binding site" evidence="3">
    <location>
        <position position="233"/>
    </location>
    <ligand>
        <name>Fe cation</name>
        <dbReference type="ChEBI" id="CHEBI:24875"/>
    </ligand>
</feature>
<feature type="binding site" evidence="3">
    <location>
        <position position="288"/>
    </location>
    <ligand>
        <name>Fe cation</name>
        <dbReference type="ChEBI" id="CHEBI:24875"/>
    </ligand>
</feature>
<feature type="binding site" evidence="3">
    <location>
        <position position="298"/>
    </location>
    <ligand>
        <name>2-oxoglutarate</name>
        <dbReference type="ChEBI" id="CHEBI:16810"/>
    </ligand>
</feature>
<feature type="mutagenesis site" description="Strongly decreased catalytic activity producing a dwarf phenotype; when associated with Y-276." evidence="4">
    <original>L</original>
    <variation>F</variation>
    <location>
        <position position="89"/>
    </location>
</feature>
<feature type="mutagenesis site" description="In le-1; strongly decreased catalytic activity producing a dwarf phenotype." evidence="4 5">
    <original>A</original>
    <variation>T</variation>
    <location>
        <position position="229"/>
    </location>
</feature>
<feature type="mutagenesis site" description="In le-3; strongly decreased catalytic activity producing a dwarf phenotype. Strongly decreased catalytic activity producing a dwarf phenotype; when associated with F-89." evidence="4 6">
    <original>H</original>
    <variation>Y</variation>
    <location>
        <position position="276"/>
    </location>
</feature>
<dbReference type="EC" id="1.14.11.15"/>
<dbReference type="EMBL" id="U85045">
    <property type="protein sequence ID" value="AAB65829.1"/>
    <property type="molecule type" value="mRNA"/>
</dbReference>
<dbReference type="EMBL" id="AF001219">
    <property type="protein sequence ID" value="AAC49792.1"/>
    <property type="molecule type" value="mRNA"/>
</dbReference>
<dbReference type="EMBL" id="AF010167">
    <property type="protein sequence ID" value="AAC49793.1"/>
    <property type="molecule type" value="mRNA"/>
</dbReference>
<dbReference type="EMBL" id="AF010168">
    <property type="protein sequence ID" value="AAC49794.1"/>
    <property type="molecule type" value="mRNA"/>
</dbReference>
<dbReference type="EMBL" id="U93210">
    <property type="protein sequence ID" value="AAC86820.1"/>
    <property type="molecule type" value="Genomic_DNA"/>
</dbReference>
<dbReference type="EMBL" id="AF007766">
    <property type="protein sequence ID" value="AAC96017.1"/>
    <property type="molecule type" value="mRNA"/>
</dbReference>
<dbReference type="EMBL" id="AF004730">
    <property type="protein sequence ID" value="AAC96015.1"/>
    <property type="molecule type" value="Genomic_DNA"/>
</dbReference>
<dbReference type="PIR" id="T06244">
    <property type="entry name" value="T06244"/>
</dbReference>
<dbReference type="PIR" id="T06245">
    <property type="entry name" value="T06245"/>
</dbReference>
<dbReference type="SMR" id="O24648"/>
<dbReference type="SABIO-RK" id="O24648"/>
<dbReference type="UniPathway" id="UPA00390"/>
<dbReference type="GO" id="GO:0016707">
    <property type="term" value="F:gibberellin 3-beta-dioxygenase activity"/>
    <property type="evidence" value="ECO:0000314"/>
    <property type="project" value="UniProtKB"/>
</dbReference>
<dbReference type="GO" id="GO:0046872">
    <property type="term" value="F:metal ion binding"/>
    <property type="evidence" value="ECO:0007669"/>
    <property type="project" value="UniProtKB-KW"/>
</dbReference>
<dbReference type="GO" id="GO:0009686">
    <property type="term" value="P:gibberellin biosynthetic process"/>
    <property type="evidence" value="ECO:0000314"/>
    <property type="project" value="UniProtKB"/>
</dbReference>
<dbReference type="FunFam" id="2.60.120.330:FF:000013">
    <property type="entry name" value="Gibberellin 3-beta-dioxygenase 1"/>
    <property type="match status" value="1"/>
</dbReference>
<dbReference type="Gene3D" id="2.60.120.330">
    <property type="entry name" value="B-lactam Antibiotic, Isopenicillin N Synthase, Chain"/>
    <property type="match status" value="1"/>
</dbReference>
<dbReference type="InterPro" id="IPR026992">
    <property type="entry name" value="DIOX_N"/>
</dbReference>
<dbReference type="InterPro" id="IPR044861">
    <property type="entry name" value="IPNS-like_FE2OG_OXY"/>
</dbReference>
<dbReference type="InterPro" id="IPR027443">
    <property type="entry name" value="IPNS-like_sf"/>
</dbReference>
<dbReference type="InterPro" id="IPR050231">
    <property type="entry name" value="Iron_ascorbate_oxido_reductase"/>
</dbReference>
<dbReference type="InterPro" id="IPR005123">
    <property type="entry name" value="Oxoglu/Fe-dep_dioxygenase_dom"/>
</dbReference>
<dbReference type="PANTHER" id="PTHR47990">
    <property type="entry name" value="2-OXOGLUTARATE (2OG) AND FE(II)-DEPENDENT OXYGENASE SUPERFAMILY PROTEIN-RELATED"/>
    <property type="match status" value="1"/>
</dbReference>
<dbReference type="Pfam" id="PF03171">
    <property type="entry name" value="2OG-FeII_Oxy"/>
    <property type="match status" value="1"/>
</dbReference>
<dbReference type="Pfam" id="PF14226">
    <property type="entry name" value="DIOX_N"/>
    <property type="match status" value="1"/>
</dbReference>
<dbReference type="SUPFAM" id="SSF51197">
    <property type="entry name" value="Clavaminate synthase-like"/>
    <property type="match status" value="1"/>
</dbReference>
<dbReference type="PROSITE" id="PS51471">
    <property type="entry name" value="FE2OG_OXY"/>
    <property type="match status" value="1"/>
</dbReference>
<evidence type="ECO:0000250" key="1"/>
<evidence type="ECO:0000255" key="2"/>
<evidence type="ECO:0000255" key="3">
    <source>
        <dbReference type="PROSITE-ProRule" id="PRU00805"/>
    </source>
</evidence>
<evidence type="ECO:0000269" key="4">
    <source>
    </source>
</evidence>
<evidence type="ECO:0000269" key="5">
    <source>
    </source>
</evidence>
<evidence type="ECO:0000269" key="6">
    <source ref="3"/>
</evidence>
<evidence type="ECO:0000305" key="7"/>